<proteinExistence type="inferred from homology"/>
<dbReference type="EC" id="2.8.1.7" evidence="1"/>
<dbReference type="EMBL" id="AE016853">
    <property type="protein sequence ID" value="AAO54944.1"/>
    <property type="molecule type" value="Genomic_DNA"/>
</dbReference>
<dbReference type="RefSeq" id="NP_791249.1">
    <property type="nucleotide sequence ID" value="NC_004578.1"/>
</dbReference>
<dbReference type="RefSeq" id="WP_005771029.1">
    <property type="nucleotide sequence ID" value="NC_004578.1"/>
</dbReference>
<dbReference type="SMR" id="Q887A1"/>
<dbReference type="STRING" id="223283.PSPTO_1423"/>
<dbReference type="GeneID" id="1183060"/>
<dbReference type="KEGG" id="pst:PSPTO_1423"/>
<dbReference type="PATRIC" id="fig|223283.9.peg.1443"/>
<dbReference type="eggNOG" id="COG1104">
    <property type="taxonomic scope" value="Bacteria"/>
</dbReference>
<dbReference type="HOGENOM" id="CLU_003433_0_2_6"/>
<dbReference type="OrthoDB" id="9808002at2"/>
<dbReference type="PhylomeDB" id="Q887A1"/>
<dbReference type="UniPathway" id="UPA00266"/>
<dbReference type="Proteomes" id="UP000002515">
    <property type="component" value="Chromosome"/>
</dbReference>
<dbReference type="GO" id="GO:1990221">
    <property type="term" value="C:L-cysteine desulfurase complex"/>
    <property type="evidence" value="ECO:0007669"/>
    <property type="project" value="UniProtKB-ARBA"/>
</dbReference>
<dbReference type="GO" id="GO:0051537">
    <property type="term" value="F:2 iron, 2 sulfur cluster binding"/>
    <property type="evidence" value="ECO:0007669"/>
    <property type="project" value="UniProtKB-UniRule"/>
</dbReference>
<dbReference type="GO" id="GO:0031071">
    <property type="term" value="F:cysteine desulfurase activity"/>
    <property type="evidence" value="ECO:0007669"/>
    <property type="project" value="UniProtKB-UniRule"/>
</dbReference>
<dbReference type="GO" id="GO:0046872">
    <property type="term" value="F:metal ion binding"/>
    <property type="evidence" value="ECO:0007669"/>
    <property type="project" value="UniProtKB-KW"/>
</dbReference>
<dbReference type="GO" id="GO:0030170">
    <property type="term" value="F:pyridoxal phosphate binding"/>
    <property type="evidence" value="ECO:0007669"/>
    <property type="project" value="UniProtKB-UniRule"/>
</dbReference>
<dbReference type="GO" id="GO:0044571">
    <property type="term" value="P:[2Fe-2S] cluster assembly"/>
    <property type="evidence" value="ECO:0007669"/>
    <property type="project" value="UniProtKB-UniRule"/>
</dbReference>
<dbReference type="FunFam" id="3.40.640.10:FF:000003">
    <property type="entry name" value="Cysteine desulfurase IscS"/>
    <property type="match status" value="1"/>
</dbReference>
<dbReference type="FunFam" id="3.90.1150.10:FF:000002">
    <property type="entry name" value="Cysteine desulfurase IscS"/>
    <property type="match status" value="1"/>
</dbReference>
<dbReference type="Gene3D" id="3.90.1150.10">
    <property type="entry name" value="Aspartate Aminotransferase, domain 1"/>
    <property type="match status" value="1"/>
</dbReference>
<dbReference type="Gene3D" id="3.40.640.10">
    <property type="entry name" value="Type I PLP-dependent aspartate aminotransferase-like (Major domain)"/>
    <property type="match status" value="1"/>
</dbReference>
<dbReference type="HAMAP" id="MF_00331">
    <property type="entry name" value="Cys_desulf_IscS"/>
    <property type="match status" value="1"/>
</dbReference>
<dbReference type="InterPro" id="IPR000192">
    <property type="entry name" value="Aminotrans_V_dom"/>
</dbReference>
<dbReference type="InterPro" id="IPR020578">
    <property type="entry name" value="Aminotrans_V_PyrdxlP_BS"/>
</dbReference>
<dbReference type="InterPro" id="IPR010240">
    <property type="entry name" value="Cys_deSase_IscS"/>
</dbReference>
<dbReference type="InterPro" id="IPR016454">
    <property type="entry name" value="Cysteine_dSase"/>
</dbReference>
<dbReference type="InterPro" id="IPR015424">
    <property type="entry name" value="PyrdxlP-dep_Trfase"/>
</dbReference>
<dbReference type="InterPro" id="IPR015421">
    <property type="entry name" value="PyrdxlP-dep_Trfase_major"/>
</dbReference>
<dbReference type="InterPro" id="IPR015422">
    <property type="entry name" value="PyrdxlP-dep_Trfase_small"/>
</dbReference>
<dbReference type="NCBIfam" id="TIGR02006">
    <property type="entry name" value="IscS"/>
    <property type="match status" value="1"/>
</dbReference>
<dbReference type="NCBIfam" id="NF010611">
    <property type="entry name" value="PRK14012.1"/>
    <property type="match status" value="1"/>
</dbReference>
<dbReference type="PANTHER" id="PTHR11601:SF34">
    <property type="entry name" value="CYSTEINE DESULFURASE"/>
    <property type="match status" value="1"/>
</dbReference>
<dbReference type="PANTHER" id="PTHR11601">
    <property type="entry name" value="CYSTEINE DESULFURYLASE FAMILY MEMBER"/>
    <property type="match status" value="1"/>
</dbReference>
<dbReference type="Pfam" id="PF00266">
    <property type="entry name" value="Aminotran_5"/>
    <property type="match status" value="1"/>
</dbReference>
<dbReference type="PIRSF" id="PIRSF005572">
    <property type="entry name" value="NifS"/>
    <property type="match status" value="1"/>
</dbReference>
<dbReference type="SUPFAM" id="SSF53383">
    <property type="entry name" value="PLP-dependent transferases"/>
    <property type="match status" value="1"/>
</dbReference>
<dbReference type="PROSITE" id="PS00595">
    <property type="entry name" value="AA_TRANSFER_CLASS_5"/>
    <property type="match status" value="1"/>
</dbReference>
<gene>
    <name evidence="1" type="primary">iscS</name>
    <name type="ordered locus">PSPTO_1423</name>
    <name type="ORF">PSPTO1423</name>
</gene>
<protein>
    <recommendedName>
        <fullName evidence="1">Cysteine desulfurase IscS</fullName>
        <ecNumber evidence="1">2.8.1.7</ecNumber>
    </recommendedName>
</protein>
<organism>
    <name type="scientific">Pseudomonas syringae pv. tomato (strain ATCC BAA-871 / DC3000)</name>
    <dbReference type="NCBI Taxonomy" id="223283"/>
    <lineage>
        <taxon>Bacteria</taxon>
        <taxon>Pseudomonadati</taxon>
        <taxon>Pseudomonadota</taxon>
        <taxon>Gammaproteobacteria</taxon>
        <taxon>Pseudomonadales</taxon>
        <taxon>Pseudomonadaceae</taxon>
        <taxon>Pseudomonas</taxon>
    </lineage>
</organism>
<accession>Q887A1</accession>
<reference key="1">
    <citation type="journal article" date="2003" name="Proc. Natl. Acad. Sci. U.S.A.">
        <title>The complete genome sequence of the Arabidopsis and tomato pathogen Pseudomonas syringae pv. tomato DC3000.</title>
        <authorList>
            <person name="Buell C.R."/>
            <person name="Joardar V."/>
            <person name="Lindeberg M."/>
            <person name="Selengut J."/>
            <person name="Paulsen I.T."/>
            <person name="Gwinn M.L."/>
            <person name="Dodson R.J."/>
            <person name="DeBoy R.T."/>
            <person name="Durkin A.S."/>
            <person name="Kolonay J.F."/>
            <person name="Madupu R."/>
            <person name="Daugherty S.C."/>
            <person name="Brinkac L.M."/>
            <person name="Beanan M.J."/>
            <person name="Haft D.H."/>
            <person name="Nelson W.C."/>
            <person name="Davidsen T.M."/>
            <person name="Zafar N."/>
            <person name="Zhou L."/>
            <person name="Liu J."/>
            <person name="Yuan Q."/>
            <person name="Khouri H.M."/>
            <person name="Fedorova N.B."/>
            <person name="Tran B."/>
            <person name="Russell D."/>
            <person name="Berry K.J."/>
            <person name="Utterback T.R."/>
            <person name="Van Aken S.E."/>
            <person name="Feldblyum T.V."/>
            <person name="D'Ascenzo M."/>
            <person name="Deng W.-L."/>
            <person name="Ramos A.R."/>
            <person name="Alfano J.R."/>
            <person name="Cartinhour S."/>
            <person name="Chatterjee A.K."/>
            <person name="Delaney T.P."/>
            <person name="Lazarowitz S.G."/>
            <person name="Martin G.B."/>
            <person name="Schneider D.J."/>
            <person name="Tang X."/>
            <person name="Bender C.L."/>
            <person name="White O."/>
            <person name="Fraser C.M."/>
            <person name="Collmer A."/>
        </authorList>
    </citation>
    <scope>NUCLEOTIDE SEQUENCE [LARGE SCALE GENOMIC DNA]</scope>
    <source>
        <strain>ATCC BAA-871 / DC3000</strain>
    </source>
</reference>
<comment type="function">
    <text evidence="1">Master enzyme that delivers sulfur to a number of partners involved in Fe-S cluster assembly, tRNA modification or cofactor biosynthesis. Catalyzes the removal of elemental sulfur atoms from cysteine to produce alanine. Functions as a sulfur delivery protein for Fe-S cluster synthesis onto IscU, an Fe-S scaffold assembly protein, as well as other S acceptor proteins.</text>
</comment>
<comment type="catalytic activity">
    <reaction evidence="1">
        <text>(sulfur carrier)-H + L-cysteine = (sulfur carrier)-SH + L-alanine</text>
        <dbReference type="Rhea" id="RHEA:43892"/>
        <dbReference type="Rhea" id="RHEA-COMP:14737"/>
        <dbReference type="Rhea" id="RHEA-COMP:14739"/>
        <dbReference type="ChEBI" id="CHEBI:29917"/>
        <dbReference type="ChEBI" id="CHEBI:35235"/>
        <dbReference type="ChEBI" id="CHEBI:57972"/>
        <dbReference type="ChEBI" id="CHEBI:64428"/>
        <dbReference type="EC" id="2.8.1.7"/>
    </reaction>
</comment>
<comment type="cofactor">
    <cofactor evidence="1">
        <name>pyridoxal 5'-phosphate</name>
        <dbReference type="ChEBI" id="CHEBI:597326"/>
    </cofactor>
</comment>
<comment type="pathway">
    <text evidence="1">Cofactor biosynthesis; iron-sulfur cluster biosynthesis.</text>
</comment>
<comment type="subunit">
    <text evidence="1">Homodimer. Forms a heterotetramer with IscU, interacts with other sulfur acceptors.</text>
</comment>
<comment type="subcellular location">
    <subcellularLocation>
        <location evidence="1">Cytoplasm</location>
    </subcellularLocation>
</comment>
<comment type="similarity">
    <text evidence="1">Belongs to the class-V pyridoxal-phosphate-dependent aminotransferase family. NifS/IscS subfamily.</text>
</comment>
<name>ISCS_PSESM</name>
<feature type="chain" id="PRO_1000119639" description="Cysteine desulfurase IscS">
    <location>
        <begin position="1"/>
        <end position="404"/>
    </location>
</feature>
<feature type="active site" description="Cysteine persulfide intermediate" evidence="1">
    <location>
        <position position="328"/>
    </location>
</feature>
<feature type="binding site" evidence="1">
    <location>
        <begin position="75"/>
        <end position="76"/>
    </location>
    <ligand>
        <name>pyridoxal 5'-phosphate</name>
        <dbReference type="ChEBI" id="CHEBI:597326"/>
    </ligand>
</feature>
<feature type="binding site" evidence="1">
    <location>
        <position position="155"/>
    </location>
    <ligand>
        <name>pyridoxal 5'-phosphate</name>
        <dbReference type="ChEBI" id="CHEBI:597326"/>
    </ligand>
</feature>
<feature type="binding site" evidence="1">
    <location>
        <position position="183"/>
    </location>
    <ligand>
        <name>pyridoxal 5'-phosphate</name>
        <dbReference type="ChEBI" id="CHEBI:597326"/>
    </ligand>
</feature>
<feature type="binding site" evidence="1">
    <location>
        <begin position="203"/>
        <end position="205"/>
    </location>
    <ligand>
        <name>pyridoxal 5'-phosphate</name>
        <dbReference type="ChEBI" id="CHEBI:597326"/>
    </ligand>
</feature>
<feature type="binding site" evidence="1">
    <location>
        <position position="243"/>
    </location>
    <ligand>
        <name>pyridoxal 5'-phosphate</name>
        <dbReference type="ChEBI" id="CHEBI:597326"/>
    </ligand>
</feature>
<feature type="binding site" description="via persulfide group" evidence="1">
    <location>
        <position position="328"/>
    </location>
    <ligand>
        <name>[2Fe-2S] cluster</name>
        <dbReference type="ChEBI" id="CHEBI:190135"/>
        <note>ligand shared with IscU</note>
    </ligand>
</feature>
<feature type="modified residue" description="N6-(pyridoxal phosphate)lysine" evidence="1">
    <location>
        <position position="206"/>
    </location>
</feature>
<sequence length="404" mass="44384">MKLPIYLDYSATTPVDPRVAQKMIECLTVEGNFGNPASRSHVFGWKAEEAVENARRQVADLVSADPREIVWTSGATESNNLAIKGVAHFYASKGKHLITSKVEHKAVLDTTRQLEREGFEVTYIEPGEDGLITPSMIEAALRDDTILVSIMHVNNEIGTINDIAAIGELTRSRGVLFHVDGAQSTGKVEIDLASLKVDLMSFSAHKTYGPKGIGALYVSRKPRVRLEAAMHGGGHERGMRSGTLATHQIVGMGEAFRIAKEEMAAESVRIKALSDRFYKQVENLEELYVNGSLTARVPHNLNLSFNYVEGESLIMALKDLAVSSGSACTSASLEPSYVLRALGRNDELAHSSIRFTFGRFSTEEEIDYAAQKVCEAVTRLRALSPLWDMFKDGVDISKIEWAAH</sequence>
<keyword id="KW-0001">2Fe-2S</keyword>
<keyword id="KW-0963">Cytoplasm</keyword>
<keyword id="KW-0408">Iron</keyword>
<keyword id="KW-0411">Iron-sulfur</keyword>
<keyword id="KW-0479">Metal-binding</keyword>
<keyword id="KW-0663">Pyridoxal phosphate</keyword>
<keyword id="KW-1185">Reference proteome</keyword>
<keyword id="KW-0808">Transferase</keyword>
<evidence type="ECO:0000255" key="1">
    <source>
        <dbReference type="HAMAP-Rule" id="MF_00331"/>
    </source>
</evidence>